<evidence type="ECO:0000250" key="1"/>
<evidence type="ECO:0000255" key="2"/>
<name>SPG1_YEAS7</name>
<sequence length="95" mass="10545">MKLDSGIYSEAQRVVRTPKFRYIMLGLVGAAVVPTAYMRRGYTVPAHSLDNINGVDTTKASVMGTEQRAAMTKGKSLQEMMDDDEVTYLMFSSIM</sequence>
<dbReference type="EMBL" id="AAFW02000100">
    <property type="protein sequence ID" value="EDN61821.1"/>
    <property type="molecule type" value="Genomic_DNA"/>
</dbReference>
<dbReference type="SMR" id="A6ZUP4"/>
<dbReference type="HOGENOM" id="CLU_183906_0_0_1"/>
<dbReference type="Proteomes" id="UP000007060">
    <property type="component" value="Unassembled WGS sequence"/>
</dbReference>
<dbReference type="GO" id="GO:0031966">
    <property type="term" value="C:mitochondrial membrane"/>
    <property type="evidence" value="ECO:0007669"/>
    <property type="project" value="UniProtKB-SubCell"/>
</dbReference>
<keyword id="KW-0472">Membrane</keyword>
<keyword id="KW-0496">Mitochondrion</keyword>
<keyword id="KW-0812">Transmembrane</keyword>
<keyword id="KW-1133">Transmembrane helix</keyword>
<gene>
    <name type="primary">SPG1</name>
    <name type="ORF">SCY_2127</name>
</gene>
<proteinExistence type="inferred from homology"/>
<reference key="1">
    <citation type="journal article" date="2007" name="Proc. Natl. Acad. Sci. U.S.A.">
        <title>Genome sequencing and comparative analysis of Saccharomyces cerevisiae strain YJM789.</title>
        <authorList>
            <person name="Wei W."/>
            <person name="McCusker J.H."/>
            <person name="Hyman R.W."/>
            <person name="Jones T."/>
            <person name="Ning Y."/>
            <person name="Cao Z."/>
            <person name="Gu Z."/>
            <person name="Bruno D."/>
            <person name="Miranda M."/>
            <person name="Nguyen M."/>
            <person name="Wilhelmy J."/>
            <person name="Komp C."/>
            <person name="Tamse R."/>
            <person name="Wang X."/>
            <person name="Jia P."/>
            <person name="Luedi P."/>
            <person name="Oefner P.J."/>
            <person name="David L."/>
            <person name="Dietrich F.S."/>
            <person name="Li Y."/>
            <person name="Davis R.W."/>
            <person name="Steinmetz L.M."/>
        </authorList>
    </citation>
    <scope>NUCLEOTIDE SEQUENCE [LARGE SCALE GENOMIC DNA]</scope>
    <source>
        <strain>YJM789</strain>
    </source>
</reference>
<accession>A6ZUP4</accession>
<comment type="subcellular location">
    <subcellularLocation>
        <location evidence="1">Mitochondrion membrane</location>
        <topology evidence="1">Single-pass membrane protein</topology>
    </subcellularLocation>
</comment>
<protein>
    <recommendedName>
        <fullName>Stationary phase gene 1 protein</fullName>
    </recommendedName>
</protein>
<feature type="chain" id="PRO_0000377678" description="Stationary phase gene 1 protein">
    <location>
        <begin position="1"/>
        <end position="95"/>
    </location>
</feature>
<feature type="transmembrane region" description="Helical" evidence="2">
    <location>
        <begin position="20"/>
        <end position="38"/>
    </location>
</feature>
<organism>
    <name type="scientific">Saccharomyces cerevisiae (strain YJM789)</name>
    <name type="common">Baker's yeast</name>
    <dbReference type="NCBI Taxonomy" id="307796"/>
    <lineage>
        <taxon>Eukaryota</taxon>
        <taxon>Fungi</taxon>
        <taxon>Dikarya</taxon>
        <taxon>Ascomycota</taxon>
        <taxon>Saccharomycotina</taxon>
        <taxon>Saccharomycetes</taxon>
        <taxon>Saccharomycetales</taxon>
        <taxon>Saccharomycetaceae</taxon>
        <taxon>Saccharomyces</taxon>
    </lineage>
</organism>